<dbReference type="EC" id="3.1.21.2" evidence="1"/>
<dbReference type="EMBL" id="CP000627">
    <property type="protein sequence ID" value="ABQ21269.1"/>
    <property type="molecule type" value="Genomic_DNA"/>
</dbReference>
<dbReference type="EMBL" id="CP001235">
    <property type="protein sequence ID" value="ACP10465.1"/>
    <property type="molecule type" value="Genomic_DNA"/>
</dbReference>
<dbReference type="RefSeq" id="WP_000273042.1">
    <property type="nucleotide sequence ID" value="NZ_JAACZH010000008.1"/>
</dbReference>
<dbReference type="SMR" id="A5F5R6"/>
<dbReference type="GeneID" id="69719029"/>
<dbReference type="KEGG" id="vco:VC0395_A1939"/>
<dbReference type="KEGG" id="vcr:VC395_2475"/>
<dbReference type="PATRIC" id="fig|345073.21.peg.2379"/>
<dbReference type="eggNOG" id="COG0648">
    <property type="taxonomic scope" value="Bacteria"/>
</dbReference>
<dbReference type="HOGENOM" id="CLU_025885_0_4_6"/>
<dbReference type="OrthoDB" id="9805666at2"/>
<dbReference type="Proteomes" id="UP000000249">
    <property type="component" value="Chromosome 2"/>
</dbReference>
<dbReference type="GO" id="GO:0008833">
    <property type="term" value="F:deoxyribonuclease IV (phage-T4-induced) activity"/>
    <property type="evidence" value="ECO:0007669"/>
    <property type="project" value="UniProtKB-UniRule"/>
</dbReference>
<dbReference type="GO" id="GO:0003677">
    <property type="term" value="F:DNA binding"/>
    <property type="evidence" value="ECO:0007669"/>
    <property type="project" value="InterPro"/>
</dbReference>
<dbReference type="GO" id="GO:0003906">
    <property type="term" value="F:DNA-(apurinic or apyrimidinic site) endonuclease activity"/>
    <property type="evidence" value="ECO:0007669"/>
    <property type="project" value="TreeGrafter"/>
</dbReference>
<dbReference type="GO" id="GO:0008081">
    <property type="term" value="F:phosphoric diester hydrolase activity"/>
    <property type="evidence" value="ECO:0007669"/>
    <property type="project" value="TreeGrafter"/>
</dbReference>
<dbReference type="GO" id="GO:0008270">
    <property type="term" value="F:zinc ion binding"/>
    <property type="evidence" value="ECO:0007669"/>
    <property type="project" value="UniProtKB-UniRule"/>
</dbReference>
<dbReference type="GO" id="GO:0006284">
    <property type="term" value="P:base-excision repair"/>
    <property type="evidence" value="ECO:0007669"/>
    <property type="project" value="TreeGrafter"/>
</dbReference>
<dbReference type="CDD" id="cd00019">
    <property type="entry name" value="AP2Ec"/>
    <property type="match status" value="1"/>
</dbReference>
<dbReference type="FunFam" id="3.20.20.150:FF:000001">
    <property type="entry name" value="Probable endonuclease 4"/>
    <property type="match status" value="1"/>
</dbReference>
<dbReference type="Gene3D" id="3.20.20.150">
    <property type="entry name" value="Divalent-metal-dependent TIM barrel enzymes"/>
    <property type="match status" value="1"/>
</dbReference>
<dbReference type="HAMAP" id="MF_00152">
    <property type="entry name" value="Nfo"/>
    <property type="match status" value="1"/>
</dbReference>
<dbReference type="InterPro" id="IPR001719">
    <property type="entry name" value="AP_endonuc_2"/>
</dbReference>
<dbReference type="InterPro" id="IPR018246">
    <property type="entry name" value="AP_endonuc_F2_Zn_BS"/>
</dbReference>
<dbReference type="InterPro" id="IPR036237">
    <property type="entry name" value="Xyl_isomerase-like_sf"/>
</dbReference>
<dbReference type="InterPro" id="IPR013022">
    <property type="entry name" value="Xyl_isomerase-like_TIM-brl"/>
</dbReference>
<dbReference type="NCBIfam" id="TIGR00587">
    <property type="entry name" value="nfo"/>
    <property type="match status" value="1"/>
</dbReference>
<dbReference type="NCBIfam" id="NF002199">
    <property type="entry name" value="PRK01060.1-4"/>
    <property type="match status" value="1"/>
</dbReference>
<dbReference type="PANTHER" id="PTHR21445:SF0">
    <property type="entry name" value="APURINIC-APYRIMIDINIC ENDONUCLEASE"/>
    <property type="match status" value="1"/>
</dbReference>
<dbReference type="PANTHER" id="PTHR21445">
    <property type="entry name" value="ENDONUCLEASE IV ENDODEOXYRIBONUCLEASE IV"/>
    <property type="match status" value="1"/>
</dbReference>
<dbReference type="Pfam" id="PF01261">
    <property type="entry name" value="AP_endonuc_2"/>
    <property type="match status" value="1"/>
</dbReference>
<dbReference type="SMART" id="SM00518">
    <property type="entry name" value="AP2Ec"/>
    <property type="match status" value="1"/>
</dbReference>
<dbReference type="SUPFAM" id="SSF51658">
    <property type="entry name" value="Xylose isomerase-like"/>
    <property type="match status" value="1"/>
</dbReference>
<dbReference type="PROSITE" id="PS00729">
    <property type="entry name" value="AP_NUCLEASE_F2_1"/>
    <property type="match status" value="1"/>
</dbReference>
<dbReference type="PROSITE" id="PS00730">
    <property type="entry name" value="AP_NUCLEASE_F2_2"/>
    <property type="match status" value="1"/>
</dbReference>
<dbReference type="PROSITE" id="PS00731">
    <property type="entry name" value="AP_NUCLEASE_F2_3"/>
    <property type="match status" value="1"/>
</dbReference>
<dbReference type="PROSITE" id="PS51432">
    <property type="entry name" value="AP_NUCLEASE_F2_4"/>
    <property type="match status" value="1"/>
</dbReference>
<sequence>MYEKLIGAHVSASGGVELAPVRAHEIGANAFALFTKNQRQWAAKPLEASSIRAFKANCKKWGFGSEAILPHDSYLINLGAPEPEKLDKSRAAFVDEMLRCDQLGLTLLNFHPGSHLQQVSEEACLATIAESINLAHRQVPNVIAVIENTAGQGSNLGWRFEHLAAIIDQVEDKERVGVCLDTCHTFAAGYDLRTKAACDETFAEFERVVGMHYLRAMHINDSKGKLASRVDRHHSLGMGEIGWECFEYIAQDARFNGIPLILETIDPDIWATEIATLRKFSTQKEN</sequence>
<reference key="1">
    <citation type="submission" date="2007-03" db="EMBL/GenBank/DDBJ databases">
        <authorList>
            <person name="Heidelberg J."/>
        </authorList>
    </citation>
    <scope>NUCLEOTIDE SEQUENCE [LARGE SCALE GENOMIC DNA]</scope>
    <source>
        <strain>ATCC 39541 / Classical Ogawa 395 / O395</strain>
    </source>
</reference>
<reference key="2">
    <citation type="journal article" date="2008" name="PLoS ONE">
        <title>A recalibrated molecular clock and independent origins for the cholera pandemic clones.</title>
        <authorList>
            <person name="Feng L."/>
            <person name="Reeves P.R."/>
            <person name="Lan R."/>
            <person name="Ren Y."/>
            <person name="Gao C."/>
            <person name="Zhou Z."/>
            <person name="Ren Y."/>
            <person name="Cheng J."/>
            <person name="Wang W."/>
            <person name="Wang J."/>
            <person name="Qian W."/>
            <person name="Li D."/>
            <person name="Wang L."/>
        </authorList>
    </citation>
    <scope>NUCLEOTIDE SEQUENCE [LARGE SCALE GENOMIC DNA]</scope>
    <source>
        <strain>ATCC 39541 / Classical Ogawa 395 / O395</strain>
    </source>
</reference>
<feature type="chain" id="PRO_1000071528" description="Probable endonuclease 4">
    <location>
        <begin position="1"/>
        <end position="286"/>
    </location>
</feature>
<feature type="binding site" evidence="1">
    <location>
        <position position="71"/>
    </location>
    <ligand>
        <name>Zn(2+)</name>
        <dbReference type="ChEBI" id="CHEBI:29105"/>
        <label>1</label>
    </ligand>
</feature>
<feature type="binding site" evidence="1">
    <location>
        <position position="111"/>
    </location>
    <ligand>
        <name>Zn(2+)</name>
        <dbReference type="ChEBI" id="CHEBI:29105"/>
        <label>1</label>
    </ligand>
</feature>
<feature type="binding site" evidence="1">
    <location>
        <position position="147"/>
    </location>
    <ligand>
        <name>Zn(2+)</name>
        <dbReference type="ChEBI" id="CHEBI:29105"/>
        <label>1</label>
    </ligand>
</feature>
<feature type="binding site" evidence="1">
    <location>
        <position position="147"/>
    </location>
    <ligand>
        <name>Zn(2+)</name>
        <dbReference type="ChEBI" id="CHEBI:29105"/>
        <label>2</label>
    </ligand>
</feature>
<feature type="binding site" evidence="1">
    <location>
        <position position="181"/>
    </location>
    <ligand>
        <name>Zn(2+)</name>
        <dbReference type="ChEBI" id="CHEBI:29105"/>
        <label>2</label>
    </ligand>
</feature>
<feature type="binding site" evidence="1">
    <location>
        <position position="184"/>
    </location>
    <ligand>
        <name>Zn(2+)</name>
        <dbReference type="ChEBI" id="CHEBI:29105"/>
        <label>3</label>
    </ligand>
</feature>
<feature type="binding site" evidence="1">
    <location>
        <position position="218"/>
    </location>
    <ligand>
        <name>Zn(2+)</name>
        <dbReference type="ChEBI" id="CHEBI:29105"/>
        <label>2</label>
    </ligand>
</feature>
<feature type="binding site" evidence="1">
    <location>
        <position position="231"/>
    </location>
    <ligand>
        <name>Zn(2+)</name>
        <dbReference type="ChEBI" id="CHEBI:29105"/>
        <label>3</label>
    </ligand>
</feature>
<feature type="binding site" evidence="1">
    <location>
        <position position="233"/>
    </location>
    <ligand>
        <name>Zn(2+)</name>
        <dbReference type="ChEBI" id="CHEBI:29105"/>
        <label>3</label>
    </ligand>
</feature>
<feature type="binding site" evidence="1">
    <location>
        <position position="263"/>
    </location>
    <ligand>
        <name>Zn(2+)</name>
        <dbReference type="ChEBI" id="CHEBI:29105"/>
        <label>2</label>
    </ligand>
</feature>
<accession>A5F5R6</accession>
<accession>C3M483</accession>
<comment type="function">
    <text evidence="1">Endonuclease IV plays a role in DNA repair. It cleaves phosphodiester bonds at apurinic or apyrimidinic (AP) sites, generating a 3'-hydroxyl group and a 5'-terminal sugar phosphate.</text>
</comment>
<comment type="catalytic activity">
    <reaction evidence="1">
        <text>Endonucleolytic cleavage to 5'-phosphooligonucleotide end-products.</text>
        <dbReference type="EC" id="3.1.21.2"/>
    </reaction>
</comment>
<comment type="cofactor">
    <cofactor evidence="1">
        <name>Zn(2+)</name>
        <dbReference type="ChEBI" id="CHEBI:29105"/>
    </cofactor>
    <text evidence="1">Binds 3 Zn(2+) ions.</text>
</comment>
<comment type="similarity">
    <text evidence="1">Belongs to the AP endonuclease 2 family.</text>
</comment>
<organism>
    <name type="scientific">Vibrio cholerae serotype O1 (strain ATCC 39541 / Classical Ogawa 395 / O395)</name>
    <dbReference type="NCBI Taxonomy" id="345073"/>
    <lineage>
        <taxon>Bacteria</taxon>
        <taxon>Pseudomonadati</taxon>
        <taxon>Pseudomonadota</taxon>
        <taxon>Gammaproteobacteria</taxon>
        <taxon>Vibrionales</taxon>
        <taxon>Vibrionaceae</taxon>
        <taxon>Vibrio</taxon>
    </lineage>
</organism>
<proteinExistence type="inferred from homology"/>
<name>END4_VIBC3</name>
<protein>
    <recommendedName>
        <fullName evidence="1">Probable endonuclease 4</fullName>
        <ecNumber evidence="1">3.1.21.2</ecNumber>
    </recommendedName>
    <alternativeName>
        <fullName evidence="1">Endodeoxyribonuclease IV</fullName>
    </alternativeName>
    <alternativeName>
        <fullName evidence="1">Endonuclease IV</fullName>
    </alternativeName>
</protein>
<keyword id="KW-0227">DNA damage</keyword>
<keyword id="KW-0234">DNA repair</keyword>
<keyword id="KW-0255">Endonuclease</keyword>
<keyword id="KW-0378">Hydrolase</keyword>
<keyword id="KW-0479">Metal-binding</keyword>
<keyword id="KW-0540">Nuclease</keyword>
<keyword id="KW-0862">Zinc</keyword>
<gene>
    <name evidence="1" type="primary">nfo</name>
    <name type="ordered locus">VC0395_A1939</name>
    <name type="ordered locus">VC395_2475</name>
</gene>
<evidence type="ECO:0000255" key="1">
    <source>
        <dbReference type="HAMAP-Rule" id="MF_00152"/>
    </source>
</evidence>